<comment type="function">
    <text evidence="1">Catalyzes the decarboxylation of 3-octaprenyl-4-hydroxy benzoate to 2-octaprenylphenol, an intermediate step in ubiquinone biosynthesis.</text>
</comment>
<comment type="catalytic activity">
    <reaction evidence="1">
        <text>a 4-hydroxy-3-(all-trans-polyprenyl)benzoate + H(+) = a 2-(all-trans-polyprenyl)phenol + CO2</text>
        <dbReference type="Rhea" id="RHEA:41680"/>
        <dbReference type="Rhea" id="RHEA-COMP:9514"/>
        <dbReference type="Rhea" id="RHEA-COMP:9516"/>
        <dbReference type="ChEBI" id="CHEBI:1269"/>
        <dbReference type="ChEBI" id="CHEBI:15378"/>
        <dbReference type="ChEBI" id="CHEBI:16526"/>
        <dbReference type="ChEBI" id="CHEBI:78396"/>
        <dbReference type="EC" id="4.1.1.98"/>
    </reaction>
</comment>
<comment type="cofactor">
    <cofactor evidence="1">
        <name>prenylated FMN</name>
        <dbReference type="ChEBI" id="CHEBI:87746"/>
    </cofactor>
    <text evidence="1">Binds 1 prenylated FMN per subunit.</text>
</comment>
<comment type="cofactor">
    <cofactor evidence="1">
        <name>Mn(2+)</name>
        <dbReference type="ChEBI" id="CHEBI:29035"/>
    </cofactor>
</comment>
<comment type="pathway">
    <text evidence="1">Cofactor biosynthesis; ubiquinone biosynthesis.</text>
</comment>
<comment type="subunit">
    <text evidence="1">Homohexamer.</text>
</comment>
<comment type="subcellular location">
    <subcellularLocation>
        <location evidence="1">Cell membrane</location>
        <topology evidence="1">Peripheral membrane protein</topology>
    </subcellularLocation>
</comment>
<comment type="similarity">
    <text evidence="1">Belongs to the UbiD family.</text>
</comment>
<gene>
    <name evidence="1" type="primary">ubiD</name>
    <name type="ordered locus">PSPPH_0289</name>
</gene>
<feature type="chain" id="PRO_0000267683" description="3-octaprenyl-4-hydroxybenzoate carboxy-lyase">
    <location>
        <begin position="1"/>
        <end position="488"/>
    </location>
</feature>
<feature type="active site" description="Proton donor" evidence="1">
    <location>
        <position position="287"/>
    </location>
</feature>
<feature type="binding site" evidence="1">
    <location>
        <position position="172"/>
    </location>
    <ligand>
        <name>Mn(2+)</name>
        <dbReference type="ChEBI" id="CHEBI:29035"/>
    </ligand>
</feature>
<feature type="binding site" evidence="1">
    <location>
        <begin position="175"/>
        <end position="177"/>
    </location>
    <ligand>
        <name>prenylated FMN</name>
        <dbReference type="ChEBI" id="CHEBI:87746"/>
    </ligand>
</feature>
<feature type="binding site" evidence="1">
    <location>
        <begin position="189"/>
        <end position="191"/>
    </location>
    <ligand>
        <name>prenylated FMN</name>
        <dbReference type="ChEBI" id="CHEBI:87746"/>
    </ligand>
</feature>
<feature type="binding site" evidence="1">
    <location>
        <begin position="194"/>
        <end position="195"/>
    </location>
    <ligand>
        <name>prenylated FMN</name>
        <dbReference type="ChEBI" id="CHEBI:87746"/>
    </ligand>
</feature>
<feature type="binding site" evidence="1">
    <location>
        <position position="238"/>
    </location>
    <ligand>
        <name>Mn(2+)</name>
        <dbReference type="ChEBI" id="CHEBI:29035"/>
    </ligand>
</feature>
<organism>
    <name type="scientific">Pseudomonas savastanoi pv. phaseolicola (strain 1448A / Race 6)</name>
    <name type="common">Pseudomonas syringae pv. phaseolicola (strain 1448A / Race 6)</name>
    <dbReference type="NCBI Taxonomy" id="264730"/>
    <lineage>
        <taxon>Bacteria</taxon>
        <taxon>Pseudomonadati</taxon>
        <taxon>Pseudomonadota</taxon>
        <taxon>Gammaproteobacteria</taxon>
        <taxon>Pseudomonadales</taxon>
        <taxon>Pseudomonadaceae</taxon>
        <taxon>Pseudomonas</taxon>
    </lineage>
</organism>
<evidence type="ECO:0000255" key="1">
    <source>
        <dbReference type="HAMAP-Rule" id="MF_01636"/>
    </source>
</evidence>
<protein>
    <recommendedName>
        <fullName evidence="1">3-octaprenyl-4-hydroxybenzoate carboxy-lyase</fullName>
        <ecNumber evidence="1">4.1.1.98</ecNumber>
    </recommendedName>
    <alternativeName>
        <fullName evidence="1">Polyprenyl p-hydroxybenzoate decarboxylase</fullName>
    </alternativeName>
</protein>
<sequence length="488" mass="54608">MKFKDLRDFVQQLEQRGELKRIQMPISPVLEMTEICDRTLRAKGPALLFEKPVGFDIPVLGNLFGTPERVAMGMGAEAVSELREIGKLLAFLKEPEPPKGLKDAWSKLPIFRKVIAMAPKVVKDAPCQEIVIEGDDVDLGMLPVQTCWPGDVAPLITWGLTVTKGPNKERQNLGIYRQQVIGRNKIIMRWLSHRGGALDFRDWCAKHPGEPYPVAVALGADPATILGAVTPVPDSLSEYAFAGLLRGSRTELIKCRGSNLQVPASAEIVLEGVIHPGEMADEGPYGDHTGYYNEVDSFPVLTVERITHRIKPIYHSTYTGRPPDEPAILGVALNEVFVPILQKQFPEIVDFYLPPEGCSYRMAVVTIKKQYPGHAKRVMLGVWSFLRQFMYTKFVIVTDDDINARDWNDVIWAITTRMDPKRDTVMIDNTPIDYLDFASPVSGLGSKMGLDVTNKWPGETTREWGRAIVKDEATTRRVDEIWTQLGID</sequence>
<keyword id="KW-1003">Cell membrane</keyword>
<keyword id="KW-0210">Decarboxylase</keyword>
<keyword id="KW-0285">Flavoprotein</keyword>
<keyword id="KW-0288">FMN</keyword>
<keyword id="KW-0456">Lyase</keyword>
<keyword id="KW-0464">Manganese</keyword>
<keyword id="KW-0472">Membrane</keyword>
<keyword id="KW-0479">Metal-binding</keyword>
<keyword id="KW-0831">Ubiquinone biosynthesis</keyword>
<dbReference type="EC" id="4.1.1.98" evidence="1"/>
<dbReference type="EMBL" id="CP000058">
    <property type="protein sequence ID" value="AAZ36611.1"/>
    <property type="molecule type" value="Genomic_DNA"/>
</dbReference>
<dbReference type="RefSeq" id="WP_011167423.1">
    <property type="nucleotide sequence ID" value="NC_005773.3"/>
</dbReference>
<dbReference type="SMR" id="Q48PS5"/>
<dbReference type="KEGG" id="psp:PSPPH_0289"/>
<dbReference type="eggNOG" id="COG0043">
    <property type="taxonomic scope" value="Bacteria"/>
</dbReference>
<dbReference type="HOGENOM" id="CLU_023348_4_1_6"/>
<dbReference type="UniPathway" id="UPA00232"/>
<dbReference type="Proteomes" id="UP000000551">
    <property type="component" value="Chromosome"/>
</dbReference>
<dbReference type="GO" id="GO:0005829">
    <property type="term" value="C:cytosol"/>
    <property type="evidence" value="ECO:0007669"/>
    <property type="project" value="TreeGrafter"/>
</dbReference>
<dbReference type="GO" id="GO:0005886">
    <property type="term" value="C:plasma membrane"/>
    <property type="evidence" value="ECO:0007669"/>
    <property type="project" value="UniProtKB-SubCell"/>
</dbReference>
<dbReference type="GO" id="GO:0008694">
    <property type="term" value="F:3-octaprenyl-4-hydroxybenzoate carboxy-lyase activity"/>
    <property type="evidence" value="ECO:0007669"/>
    <property type="project" value="UniProtKB-UniRule"/>
</dbReference>
<dbReference type="GO" id="GO:0046872">
    <property type="term" value="F:metal ion binding"/>
    <property type="evidence" value="ECO:0007669"/>
    <property type="project" value="UniProtKB-KW"/>
</dbReference>
<dbReference type="GO" id="GO:0006744">
    <property type="term" value="P:ubiquinone biosynthetic process"/>
    <property type="evidence" value="ECO:0007669"/>
    <property type="project" value="UniProtKB-UniRule"/>
</dbReference>
<dbReference type="FunFam" id="1.20.5.570:FF:000001">
    <property type="entry name" value="3-octaprenyl-4-hydroxybenzoate carboxy-lyase"/>
    <property type="match status" value="1"/>
</dbReference>
<dbReference type="FunFam" id="3.40.1670.10:FF:000001">
    <property type="entry name" value="3-octaprenyl-4-hydroxybenzoate carboxy-lyase"/>
    <property type="match status" value="1"/>
</dbReference>
<dbReference type="Gene3D" id="1.20.5.570">
    <property type="entry name" value="Single helix bin"/>
    <property type="match status" value="1"/>
</dbReference>
<dbReference type="Gene3D" id="3.40.1670.10">
    <property type="entry name" value="UbiD C-terminal domain-like"/>
    <property type="match status" value="1"/>
</dbReference>
<dbReference type="HAMAP" id="MF_01636">
    <property type="entry name" value="UbiD"/>
    <property type="match status" value="1"/>
</dbReference>
<dbReference type="InterPro" id="IPR002830">
    <property type="entry name" value="UbiD"/>
</dbReference>
<dbReference type="InterPro" id="IPR049381">
    <property type="entry name" value="UbiD-like_C"/>
</dbReference>
<dbReference type="InterPro" id="IPR049383">
    <property type="entry name" value="UbiD-like_N"/>
</dbReference>
<dbReference type="InterPro" id="IPR023677">
    <property type="entry name" value="UbiD_bacteria"/>
</dbReference>
<dbReference type="InterPro" id="IPR048304">
    <property type="entry name" value="UbiD_Rift_dom"/>
</dbReference>
<dbReference type="NCBIfam" id="NF008175">
    <property type="entry name" value="PRK10922.1"/>
    <property type="match status" value="1"/>
</dbReference>
<dbReference type="NCBIfam" id="TIGR00148">
    <property type="entry name" value="UbiD family decarboxylase"/>
    <property type="match status" value="1"/>
</dbReference>
<dbReference type="PANTHER" id="PTHR30108">
    <property type="entry name" value="3-OCTAPRENYL-4-HYDROXYBENZOATE CARBOXY-LYASE-RELATED"/>
    <property type="match status" value="1"/>
</dbReference>
<dbReference type="PANTHER" id="PTHR30108:SF17">
    <property type="entry name" value="FERULIC ACID DECARBOXYLASE 1"/>
    <property type="match status" value="1"/>
</dbReference>
<dbReference type="Pfam" id="PF01977">
    <property type="entry name" value="UbiD"/>
    <property type="match status" value="1"/>
</dbReference>
<dbReference type="Pfam" id="PF20696">
    <property type="entry name" value="UbiD_C"/>
    <property type="match status" value="1"/>
</dbReference>
<dbReference type="Pfam" id="PF20695">
    <property type="entry name" value="UbiD_N"/>
    <property type="match status" value="1"/>
</dbReference>
<dbReference type="SUPFAM" id="SSF50475">
    <property type="entry name" value="FMN-binding split barrel"/>
    <property type="match status" value="1"/>
</dbReference>
<dbReference type="SUPFAM" id="SSF143968">
    <property type="entry name" value="UbiD C-terminal domain-like"/>
    <property type="match status" value="1"/>
</dbReference>
<name>UBID_PSE14</name>
<reference key="1">
    <citation type="journal article" date="2005" name="J. Bacteriol.">
        <title>Whole-genome sequence analysis of Pseudomonas syringae pv. phaseolicola 1448A reveals divergence among pathovars in genes involved in virulence and transposition.</title>
        <authorList>
            <person name="Joardar V."/>
            <person name="Lindeberg M."/>
            <person name="Jackson R.W."/>
            <person name="Selengut J."/>
            <person name="Dodson R."/>
            <person name="Brinkac L.M."/>
            <person name="Daugherty S.C."/>
            <person name="DeBoy R.T."/>
            <person name="Durkin A.S."/>
            <person name="Gwinn Giglio M."/>
            <person name="Madupu R."/>
            <person name="Nelson W.C."/>
            <person name="Rosovitz M.J."/>
            <person name="Sullivan S.A."/>
            <person name="Crabtree J."/>
            <person name="Creasy T."/>
            <person name="Davidsen T.M."/>
            <person name="Haft D.H."/>
            <person name="Zafar N."/>
            <person name="Zhou L."/>
            <person name="Halpin R."/>
            <person name="Holley T."/>
            <person name="Khouri H.M."/>
            <person name="Feldblyum T.V."/>
            <person name="White O."/>
            <person name="Fraser C.M."/>
            <person name="Chatterjee A.K."/>
            <person name="Cartinhour S."/>
            <person name="Schneider D."/>
            <person name="Mansfield J.W."/>
            <person name="Collmer A."/>
            <person name="Buell R."/>
        </authorList>
    </citation>
    <scope>NUCLEOTIDE SEQUENCE [LARGE SCALE GENOMIC DNA]</scope>
    <source>
        <strain>1448A / Race 6</strain>
    </source>
</reference>
<proteinExistence type="inferred from homology"/>
<accession>Q48PS5</accession>